<organism>
    <name type="scientific">Helicobacter pylori (strain G27)</name>
    <dbReference type="NCBI Taxonomy" id="563041"/>
    <lineage>
        <taxon>Bacteria</taxon>
        <taxon>Pseudomonadati</taxon>
        <taxon>Campylobacterota</taxon>
        <taxon>Epsilonproteobacteria</taxon>
        <taxon>Campylobacterales</taxon>
        <taxon>Helicobacteraceae</taxon>
        <taxon>Helicobacter</taxon>
    </lineage>
</organism>
<feature type="chain" id="PRO_1000125829" description="Putative nickel-responsive regulator">
    <location>
        <begin position="1"/>
        <end position="148"/>
    </location>
</feature>
<feature type="binding site" evidence="1">
    <location>
        <position position="88"/>
    </location>
    <ligand>
        <name>Ni(2+)</name>
        <dbReference type="ChEBI" id="CHEBI:49786"/>
    </ligand>
</feature>
<feature type="binding site" evidence="1">
    <location>
        <position position="99"/>
    </location>
    <ligand>
        <name>Ni(2+)</name>
        <dbReference type="ChEBI" id="CHEBI:49786"/>
    </ligand>
</feature>
<feature type="binding site" evidence="1">
    <location>
        <position position="101"/>
    </location>
    <ligand>
        <name>Ni(2+)</name>
        <dbReference type="ChEBI" id="CHEBI:49786"/>
    </ligand>
</feature>
<feature type="binding site" evidence="1">
    <location>
        <position position="107"/>
    </location>
    <ligand>
        <name>Ni(2+)</name>
        <dbReference type="ChEBI" id="CHEBI:49786"/>
    </ligand>
</feature>
<feature type="strand" evidence="2">
    <location>
        <begin position="63"/>
        <end position="72"/>
    </location>
</feature>
<feature type="helix" evidence="2">
    <location>
        <begin position="79"/>
        <end position="89"/>
    </location>
</feature>
<feature type="helix" evidence="2">
    <location>
        <begin position="90"/>
        <end position="93"/>
    </location>
</feature>
<feature type="strand" evidence="2">
    <location>
        <begin position="94"/>
        <end position="103"/>
    </location>
</feature>
<feature type="strand" evidence="2">
    <location>
        <begin position="106"/>
        <end position="116"/>
    </location>
</feature>
<feature type="helix" evidence="2">
    <location>
        <begin position="117"/>
        <end position="129"/>
    </location>
</feature>
<feature type="strand" evidence="2">
    <location>
        <begin position="133"/>
        <end position="140"/>
    </location>
</feature>
<comment type="function">
    <text evidence="1">Transcriptional regulator.</text>
</comment>
<comment type="cofactor">
    <cofactor evidence="1">
        <name>Ni(2+)</name>
        <dbReference type="ChEBI" id="CHEBI:49786"/>
    </cofactor>
    <text evidence="1">Binds 1 nickel ion per subunit.</text>
</comment>
<comment type="similarity">
    <text evidence="1">Belongs to the transcriptional regulatory CopG/NikR family.</text>
</comment>
<name>NIKR_HELPG</name>
<keyword id="KW-0002">3D-structure</keyword>
<keyword id="KW-0238">DNA-binding</keyword>
<keyword id="KW-0479">Metal-binding</keyword>
<keyword id="KW-0533">Nickel</keyword>
<keyword id="KW-1185">Reference proteome</keyword>
<keyword id="KW-0804">Transcription</keyword>
<keyword id="KW-0805">Transcription regulation</keyword>
<dbReference type="EMBL" id="CP001173">
    <property type="protein sequence ID" value="ACI28034.1"/>
    <property type="molecule type" value="Genomic_DNA"/>
</dbReference>
<dbReference type="RefSeq" id="WP_000380786.1">
    <property type="nucleotide sequence ID" value="NC_011333.1"/>
</dbReference>
<dbReference type="PDB" id="2Y3Y">
    <property type="method" value="X-ray"/>
    <property type="resolution" value="2.39 A"/>
    <property type="chains" value="A/B/C/D=58-148"/>
</dbReference>
<dbReference type="PDBsum" id="2Y3Y"/>
<dbReference type="BMRB" id="B5Z8Y5"/>
<dbReference type="SMR" id="B5Z8Y5"/>
<dbReference type="KEGG" id="hpg:HPG27_1286"/>
<dbReference type="HOGENOM" id="CLU_113319_1_2_7"/>
<dbReference type="EvolutionaryTrace" id="B5Z8Y5"/>
<dbReference type="Proteomes" id="UP000001735">
    <property type="component" value="Chromosome"/>
</dbReference>
<dbReference type="CollecTF" id="EXPREG_00000350"/>
<dbReference type="GO" id="GO:0032993">
    <property type="term" value="C:protein-DNA complex"/>
    <property type="evidence" value="ECO:0000353"/>
    <property type="project" value="CollecTF"/>
</dbReference>
<dbReference type="GO" id="GO:0001217">
    <property type="term" value="F:DNA-binding transcription repressor activity"/>
    <property type="evidence" value="ECO:0000353"/>
    <property type="project" value="CollecTF"/>
</dbReference>
<dbReference type="GO" id="GO:0016151">
    <property type="term" value="F:nickel cation binding"/>
    <property type="evidence" value="ECO:0007669"/>
    <property type="project" value="UniProtKB-UniRule"/>
</dbReference>
<dbReference type="GO" id="GO:0000976">
    <property type="term" value="F:transcription cis-regulatory region binding"/>
    <property type="evidence" value="ECO:0000353"/>
    <property type="project" value="CollecTF"/>
</dbReference>
<dbReference type="GO" id="GO:0045892">
    <property type="term" value="P:negative regulation of DNA-templated transcription"/>
    <property type="evidence" value="ECO:0000270"/>
    <property type="project" value="CollecTF"/>
</dbReference>
<dbReference type="GO" id="GO:0010045">
    <property type="term" value="P:response to nickel cation"/>
    <property type="evidence" value="ECO:0007669"/>
    <property type="project" value="InterPro"/>
</dbReference>
<dbReference type="CDD" id="cd22231">
    <property type="entry name" value="RHH_NikR_HicB-like"/>
    <property type="match status" value="1"/>
</dbReference>
<dbReference type="FunFam" id="1.10.1220.10:FF:000010">
    <property type="entry name" value="Putative nickel-responsive regulator"/>
    <property type="match status" value="1"/>
</dbReference>
<dbReference type="FunFam" id="3.30.70.1150:FF:000004">
    <property type="entry name" value="Putative nickel-responsive regulator"/>
    <property type="match status" value="1"/>
</dbReference>
<dbReference type="Gene3D" id="3.30.70.1150">
    <property type="entry name" value="ACT-like. Chain A, domain 2"/>
    <property type="match status" value="1"/>
</dbReference>
<dbReference type="Gene3D" id="1.10.1220.10">
    <property type="entry name" value="Met repressor-like"/>
    <property type="match status" value="1"/>
</dbReference>
<dbReference type="HAMAP" id="MF_00476">
    <property type="entry name" value="NikR"/>
    <property type="match status" value="1"/>
</dbReference>
<dbReference type="InterPro" id="IPR027271">
    <property type="entry name" value="Acetolactate_synth/TF_NikR_C"/>
</dbReference>
<dbReference type="InterPro" id="IPR045865">
    <property type="entry name" value="ACT-like_dom_sf"/>
</dbReference>
<dbReference type="InterPro" id="IPR013321">
    <property type="entry name" value="Arc_rbn_hlx_hlx"/>
</dbReference>
<dbReference type="InterPro" id="IPR002145">
    <property type="entry name" value="CopG"/>
</dbReference>
<dbReference type="InterPro" id="IPR050192">
    <property type="entry name" value="CopG/NikR_regulator"/>
</dbReference>
<dbReference type="InterPro" id="IPR022988">
    <property type="entry name" value="Ni_resp_reg_NikR"/>
</dbReference>
<dbReference type="InterPro" id="IPR010985">
    <property type="entry name" value="Ribbon_hlx_hlx"/>
</dbReference>
<dbReference type="InterPro" id="IPR014864">
    <property type="entry name" value="TF_NikR_Ni-bd_C"/>
</dbReference>
<dbReference type="NCBIfam" id="NF001884">
    <property type="entry name" value="PRK00630.1"/>
    <property type="match status" value="1"/>
</dbReference>
<dbReference type="NCBIfam" id="NF002169">
    <property type="entry name" value="PRK01002.1"/>
    <property type="match status" value="1"/>
</dbReference>
<dbReference type="NCBIfam" id="NF002815">
    <property type="entry name" value="PRK02967.1"/>
    <property type="match status" value="1"/>
</dbReference>
<dbReference type="NCBIfam" id="NF003381">
    <property type="entry name" value="PRK04460.1"/>
    <property type="match status" value="1"/>
</dbReference>
<dbReference type="PANTHER" id="PTHR34719">
    <property type="entry name" value="NICKEL-RESPONSIVE REGULATOR"/>
    <property type="match status" value="1"/>
</dbReference>
<dbReference type="PANTHER" id="PTHR34719:SF2">
    <property type="entry name" value="NICKEL-RESPONSIVE REGULATOR"/>
    <property type="match status" value="1"/>
</dbReference>
<dbReference type="Pfam" id="PF08753">
    <property type="entry name" value="NikR_C"/>
    <property type="match status" value="1"/>
</dbReference>
<dbReference type="Pfam" id="PF01402">
    <property type="entry name" value="RHH_1"/>
    <property type="match status" value="1"/>
</dbReference>
<dbReference type="SUPFAM" id="SSF55021">
    <property type="entry name" value="ACT-like"/>
    <property type="match status" value="1"/>
</dbReference>
<dbReference type="SUPFAM" id="SSF47598">
    <property type="entry name" value="Ribbon-helix-helix"/>
    <property type="match status" value="1"/>
</dbReference>
<proteinExistence type="evidence at protein level"/>
<protein>
    <recommendedName>
        <fullName evidence="1">Putative nickel-responsive regulator</fullName>
    </recommendedName>
</protein>
<gene>
    <name type="ordered locus">HPG27_1286</name>
</gene>
<sequence>MDTPNKDDSIIRFSVSLQQNLLDELDNRIIKNGYSSRSELVRDMIREKLVEDNWAEDNPNDESKIAVLVVIYDHHQRELNQRMIDIQHASGTHVLCTTHIHMDEHNCLETIILQGNSFEIQRLQLEIGGLRGVKFAKLTKASSFEHNE</sequence>
<accession>B5Z8Y5</accession>
<evidence type="ECO:0000255" key="1">
    <source>
        <dbReference type="HAMAP-Rule" id="MF_00476"/>
    </source>
</evidence>
<evidence type="ECO:0007829" key="2">
    <source>
        <dbReference type="PDB" id="2Y3Y"/>
    </source>
</evidence>
<reference key="1">
    <citation type="journal article" date="2009" name="J. Bacteriol.">
        <title>The complete genome sequence of Helicobacter pylori strain G27.</title>
        <authorList>
            <person name="Baltrus D.A."/>
            <person name="Amieva M.R."/>
            <person name="Covacci A."/>
            <person name="Lowe T.M."/>
            <person name="Merrell D.S."/>
            <person name="Ottemann K.M."/>
            <person name="Stein M."/>
            <person name="Salama N.R."/>
            <person name="Guillemin K."/>
        </authorList>
    </citation>
    <scope>NUCLEOTIDE SEQUENCE [LARGE SCALE GENOMIC DNA]</scope>
    <source>
        <strain>G27</strain>
    </source>
</reference>